<comment type="function">
    <text evidence="1">Removes the formyl group from the N-terminal Met of newly synthesized proteins. Requires at least a dipeptide for an efficient rate of reaction. N-terminal L-methionine is a prerequisite for activity but the enzyme has broad specificity at other positions.</text>
</comment>
<comment type="catalytic activity">
    <reaction evidence="1">
        <text>N-terminal N-formyl-L-methionyl-[peptide] + H2O = N-terminal L-methionyl-[peptide] + formate</text>
        <dbReference type="Rhea" id="RHEA:24420"/>
        <dbReference type="Rhea" id="RHEA-COMP:10639"/>
        <dbReference type="Rhea" id="RHEA-COMP:10640"/>
        <dbReference type="ChEBI" id="CHEBI:15377"/>
        <dbReference type="ChEBI" id="CHEBI:15740"/>
        <dbReference type="ChEBI" id="CHEBI:49298"/>
        <dbReference type="ChEBI" id="CHEBI:64731"/>
        <dbReference type="EC" id="3.5.1.88"/>
    </reaction>
</comment>
<comment type="cofactor">
    <cofactor evidence="1">
        <name>Fe(2+)</name>
        <dbReference type="ChEBI" id="CHEBI:29033"/>
    </cofactor>
    <text evidence="1">Binds 1 Fe(2+) ion.</text>
</comment>
<comment type="similarity">
    <text evidence="1">Belongs to the polypeptide deformylase family.</text>
</comment>
<evidence type="ECO:0000255" key="1">
    <source>
        <dbReference type="HAMAP-Rule" id="MF_00163"/>
    </source>
</evidence>
<accession>Q87KD5</accession>
<proteinExistence type="inferred from homology"/>
<reference key="1">
    <citation type="journal article" date="2003" name="Lancet">
        <title>Genome sequence of Vibrio parahaemolyticus: a pathogenic mechanism distinct from that of V. cholerae.</title>
        <authorList>
            <person name="Makino K."/>
            <person name="Oshima K."/>
            <person name="Kurokawa K."/>
            <person name="Yokoyama K."/>
            <person name="Uda T."/>
            <person name="Tagomori K."/>
            <person name="Iijima Y."/>
            <person name="Najima M."/>
            <person name="Nakano M."/>
            <person name="Yamashita A."/>
            <person name="Kubota Y."/>
            <person name="Kimura S."/>
            <person name="Yasunaga T."/>
            <person name="Honda T."/>
            <person name="Shinagawa H."/>
            <person name="Hattori M."/>
            <person name="Iida T."/>
        </authorList>
    </citation>
    <scope>NUCLEOTIDE SEQUENCE [LARGE SCALE GENOMIC DNA]</scope>
    <source>
        <strain>RIMD 2210633</strain>
    </source>
</reference>
<protein>
    <recommendedName>
        <fullName evidence="1">Peptide deformylase 1</fullName>
        <shortName evidence="1">PDF 1</shortName>
        <ecNumber evidence="1">3.5.1.88</ecNumber>
    </recommendedName>
    <alternativeName>
        <fullName evidence="1">Polypeptide deformylase 1</fullName>
    </alternativeName>
</protein>
<feature type="chain" id="PRO_0000082875" description="Peptide deformylase 1">
    <location>
        <begin position="1"/>
        <end position="172"/>
    </location>
</feature>
<feature type="active site" evidence="1">
    <location>
        <position position="134"/>
    </location>
</feature>
<feature type="binding site" evidence="1">
    <location>
        <position position="91"/>
    </location>
    <ligand>
        <name>Fe cation</name>
        <dbReference type="ChEBI" id="CHEBI:24875"/>
    </ligand>
</feature>
<feature type="binding site" evidence="1">
    <location>
        <position position="133"/>
    </location>
    <ligand>
        <name>Fe cation</name>
        <dbReference type="ChEBI" id="CHEBI:24875"/>
    </ligand>
</feature>
<feature type="binding site" evidence="1">
    <location>
        <position position="137"/>
    </location>
    <ligand>
        <name>Fe cation</name>
        <dbReference type="ChEBI" id="CHEBI:24875"/>
    </ligand>
</feature>
<keyword id="KW-0378">Hydrolase</keyword>
<keyword id="KW-0408">Iron</keyword>
<keyword id="KW-0479">Metal-binding</keyword>
<keyword id="KW-0648">Protein biosynthesis</keyword>
<dbReference type="EC" id="3.5.1.88" evidence="1"/>
<dbReference type="EMBL" id="BA000031">
    <property type="protein sequence ID" value="BAC61305.1"/>
    <property type="molecule type" value="Genomic_DNA"/>
</dbReference>
<dbReference type="RefSeq" id="NP_799421.1">
    <property type="nucleotide sequence ID" value="NC_004603.1"/>
</dbReference>
<dbReference type="SMR" id="Q87KD5"/>
<dbReference type="GeneID" id="1190641"/>
<dbReference type="KEGG" id="vpa:VP3042"/>
<dbReference type="PATRIC" id="fig|223926.6.peg.2927"/>
<dbReference type="eggNOG" id="COG0242">
    <property type="taxonomic scope" value="Bacteria"/>
</dbReference>
<dbReference type="HOGENOM" id="CLU_061901_2_1_6"/>
<dbReference type="Proteomes" id="UP000002493">
    <property type="component" value="Chromosome 1"/>
</dbReference>
<dbReference type="GO" id="GO:0046872">
    <property type="term" value="F:metal ion binding"/>
    <property type="evidence" value="ECO:0007669"/>
    <property type="project" value="UniProtKB-KW"/>
</dbReference>
<dbReference type="GO" id="GO:0042586">
    <property type="term" value="F:peptide deformylase activity"/>
    <property type="evidence" value="ECO:0007669"/>
    <property type="project" value="UniProtKB-UniRule"/>
</dbReference>
<dbReference type="GO" id="GO:0043686">
    <property type="term" value="P:co-translational protein modification"/>
    <property type="evidence" value="ECO:0007669"/>
    <property type="project" value="TreeGrafter"/>
</dbReference>
<dbReference type="GO" id="GO:0006412">
    <property type="term" value="P:translation"/>
    <property type="evidence" value="ECO:0007669"/>
    <property type="project" value="UniProtKB-UniRule"/>
</dbReference>
<dbReference type="CDD" id="cd00487">
    <property type="entry name" value="Pep_deformylase"/>
    <property type="match status" value="1"/>
</dbReference>
<dbReference type="FunFam" id="3.90.45.10:FF:000001">
    <property type="entry name" value="Peptide deformylase"/>
    <property type="match status" value="1"/>
</dbReference>
<dbReference type="Gene3D" id="3.90.45.10">
    <property type="entry name" value="Peptide deformylase"/>
    <property type="match status" value="1"/>
</dbReference>
<dbReference type="HAMAP" id="MF_00163">
    <property type="entry name" value="Pep_deformylase"/>
    <property type="match status" value="1"/>
</dbReference>
<dbReference type="InterPro" id="IPR023635">
    <property type="entry name" value="Peptide_deformylase"/>
</dbReference>
<dbReference type="InterPro" id="IPR036821">
    <property type="entry name" value="Peptide_deformylase_sf"/>
</dbReference>
<dbReference type="NCBIfam" id="TIGR00079">
    <property type="entry name" value="pept_deformyl"/>
    <property type="match status" value="1"/>
</dbReference>
<dbReference type="NCBIfam" id="NF001159">
    <property type="entry name" value="PRK00150.1-3"/>
    <property type="match status" value="1"/>
</dbReference>
<dbReference type="PANTHER" id="PTHR10458">
    <property type="entry name" value="PEPTIDE DEFORMYLASE"/>
    <property type="match status" value="1"/>
</dbReference>
<dbReference type="PANTHER" id="PTHR10458:SF21">
    <property type="entry name" value="PEPTIDE DEFORMYLASE"/>
    <property type="match status" value="1"/>
</dbReference>
<dbReference type="Pfam" id="PF01327">
    <property type="entry name" value="Pep_deformylase"/>
    <property type="match status" value="1"/>
</dbReference>
<dbReference type="PIRSF" id="PIRSF004749">
    <property type="entry name" value="Pep_def"/>
    <property type="match status" value="1"/>
</dbReference>
<dbReference type="PRINTS" id="PR01576">
    <property type="entry name" value="PDEFORMYLASE"/>
</dbReference>
<dbReference type="SUPFAM" id="SSF56420">
    <property type="entry name" value="Peptide deformylase"/>
    <property type="match status" value="1"/>
</dbReference>
<organism>
    <name type="scientific">Vibrio parahaemolyticus serotype O3:K6 (strain RIMD 2210633)</name>
    <dbReference type="NCBI Taxonomy" id="223926"/>
    <lineage>
        <taxon>Bacteria</taxon>
        <taxon>Pseudomonadati</taxon>
        <taxon>Pseudomonadota</taxon>
        <taxon>Gammaproteobacteria</taxon>
        <taxon>Vibrionales</taxon>
        <taxon>Vibrionaceae</taxon>
        <taxon>Vibrio</taxon>
    </lineage>
</organism>
<sequence length="172" mass="19405">MSVLQVLTFPDDRLRTVAKPVDAVTPEIQKIVDDMIETMYDEEGIGLAATQVDIHKRIVVIDISETRDEPMVLINPEILEKRGEDGIEEGCLSVPGARALVPRAAEVTVKALDRDGKEFTFEADDLLAICVQHELDHLQGKLFVDYLSPLKRKRIQDKLAKIKRFNEKQQNA</sequence>
<gene>
    <name evidence="1" type="primary">def1</name>
    <name type="ordered locus">VP3042</name>
</gene>
<name>DEF1_VIBPA</name>